<gene>
    <name evidence="1" type="primary">tmk</name>
    <name type="ordered locus">SACOL0524</name>
</gene>
<accession>Q5HIJ5</accession>
<organism>
    <name type="scientific">Staphylococcus aureus (strain COL)</name>
    <dbReference type="NCBI Taxonomy" id="93062"/>
    <lineage>
        <taxon>Bacteria</taxon>
        <taxon>Bacillati</taxon>
        <taxon>Bacillota</taxon>
        <taxon>Bacilli</taxon>
        <taxon>Bacillales</taxon>
        <taxon>Staphylococcaceae</taxon>
        <taxon>Staphylococcus</taxon>
    </lineage>
</organism>
<sequence length="205" mass="23425">MSAFITFEGPEGSGKTTVINEVYHRLVKDYDVIMTREPGGVPTGEEIRKIVLEGNDMDIRTEAMLFAASRREHLVLKVIPALKEGKVVLCDRYIDSSLAYQGYARGIGVEEVRALNEFAINGLYPDLTIYLNVSAEVGRERIIKNSRDQNRLDQEDLKFHEKVIEGYQEIIHNESQRFKSVNADQPLENVVEDTYQTIIKYLEKI</sequence>
<evidence type="ECO:0000255" key="1">
    <source>
        <dbReference type="HAMAP-Rule" id="MF_00165"/>
    </source>
</evidence>
<reference key="1">
    <citation type="journal article" date="2005" name="J. Bacteriol.">
        <title>Insights on evolution of virulence and resistance from the complete genome analysis of an early methicillin-resistant Staphylococcus aureus strain and a biofilm-producing methicillin-resistant Staphylococcus epidermidis strain.</title>
        <authorList>
            <person name="Gill S.R."/>
            <person name="Fouts D.E."/>
            <person name="Archer G.L."/>
            <person name="Mongodin E.F."/>
            <person name="DeBoy R.T."/>
            <person name="Ravel J."/>
            <person name="Paulsen I.T."/>
            <person name="Kolonay J.F."/>
            <person name="Brinkac L.M."/>
            <person name="Beanan M.J."/>
            <person name="Dodson R.J."/>
            <person name="Daugherty S.C."/>
            <person name="Madupu R."/>
            <person name="Angiuoli S.V."/>
            <person name="Durkin A.S."/>
            <person name="Haft D.H."/>
            <person name="Vamathevan J.J."/>
            <person name="Khouri H."/>
            <person name="Utterback T.R."/>
            <person name="Lee C."/>
            <person name="Dimitrov G."/>
            <person name="Jiang L."/>
            <person name="Qin H."/>
            <person name="Weidman J."/>
            <person name="Tran K."/>
            <person name="Kang K.H."/>
            <person name="Hance I.R."/>
            <person name="Nelson K.E."/>
            <person name="Fraser C.M."/>
        </authorList>
    </citation>
    <scope>NUCLEOTIDE SEQUENCE [LARGE SCALE GENOMIC DNA]</scope>
    <source>
        <strain>COL</strain>
    </source>
</reference>
<feature type="chain" id="PRO_0000155338" description="Thymidylate kinase">
    <location>
        <begin position="1"/>
        <end position="205"/>
    </location>
</feature>
<feature type="binding site" evidence="1">
    <location>
        <begin position="9"/>
        <end position="16"/>
    </location>
    <ligand>
        <name>ATP</name>
        <dbReference type="ChEBI" id="CHEBI:30616"/>
    </ligand>
</feature>
<keyword id="KW-0067">ATP-binding</keyword>
<keyword id="KW-0418">Kinase</keyword>
<keyword id="KW-0545">Nucleotide biosynthesis</keyword>
<keyword id="KW-0547">Nucleotide-binding</keyword>
<keyword id="KW-0808">Transferase</keyword>
<name>KTHY_STAAC</name>
<protein>
    <recommendedName>
        <fullName evidence="1">Thymidylate kinase</fullName>
        <ecNumber evidence="1">2.7.4.9</ecNumber>
    </recommendedName>
    <alternativeName>
        <fullName evidence="1">dTMP kinase</fullName>
    </alternativeName>
</protein>
<dbReference type="EC" id="2.7.4.9" evidence="1"/>
<dbReference type="EMBL" id="CP000046">
    <property type="protein sequence ID" value="AAW37643.1"/>
    <property type="molecule type" value="Genomic_DNA"/>
</dbReference>
<dbReference type="RefSeq" id="WP_001272126.1">
    <property type="nucleotide sequence ID" value="NZ_JBGOFO010000012.1"/>
</dbReference>
<dbReference type="SMR" id="Q5HIJ5"/>
<dbReference type="GeneID" id="98344796"/>
<dbReference type="KEGG" id="sac:SACOL0524"/>
<dbReference type="HOGENOM" id="CLU_049131_0_2_9"/>
<dbReference type="Proteomes" id="UP000000530">
    <property type="component" value="Chromosome"/>
</dbReference>
<dbReference type="GO" id="GO:0005829">
    <property type="term" value="C:cytosol"/>
    <property type="evidence" value="ECO:0007669"/>
    <property type="project" value="TreeGrafter"/>
</dbReference>
<dbReference type="GO" id="GO:0005524">
    <property type="term" value="F:ATP binding"/>
    <property type="evidence" value="ECO:0007669"/>
    <property type="project" value="UniProtKB-UniRule"/>
</dbReference>
<dbReference type="GO" id="GO:0004798">
    <property type="term" value="F:dTMP kinase activity"/>
    <property type="evidence" value="ECO:0007669"/>
    <property type="project" value="UniProtKB-UniRule"/>
</dbReference>
<dbReference type="GO" id="GO:0006233">
    <property type="term" value="P:dTDP biosynthetic process"/>
    <property type="evidence" value="ECO:0007669"/>
    <property type="project" value="InterPro"/>
</dbReference>
<dbReference type="GO" id="GO:0006235">
    <property type="term" value="P:dTTP biosynthetic process"/>
    <property type="evidence" value="ECO:0007669"/>
    <property type="project" value="UniProtKB-UniRule"/>
</dbReference>
<dbReference type="GO" id="GO:0006227">
    <property type="term" value="P:dUDP biosynthetic process"/>
    <property type="evidence" value="ECO:0007669"/>
    <property type="project" value="TreeGrafter"/>
</dbReference>
<dbReference type="CDD" id="cd01672">
    <property type="entry name" value="TMPK"/>
    <property type="match status" value="1"/>
</dbReference>
<dbReference type="FunFam" id="3.40.50.300:FF:000225">
    <property type="entry name" value="Thymidylate kinase"/>
    <property type="match status" value="1"/>
</dbReference>
<dbReference type="Gene3D" id="3.40.50.300">
    <property type="entry name" value="P-loop containing nucleotide triphosphate hydrolases"/>
    <property type="match status" value="1"/>
</dbReference>
<dbReference type="HAMAP" id="MF_00165">
    <property type="entry name" value="Thymidylate_kinase"/>
    <property type="match status" value="1"/>
</dbReference>
<dbReference type="InterPro" id="IPR027417">
    <property type="entry name" value="P-loop_NTPase"/>
</dbReference>
<dbReference type="InterPro" id="IPR039430">
    <property type="entry name" value="Thymidylate_kin-like_dom"/>
</dbReference>
<dbReference type="InterPro" id="IPR018095">
    <property type="entry name" value="Thymidylate_kin_CS"/>
</dbReference>
<dbReference type="InterPro" id="IPR018094">
    <property type="entry name" value="Thymidylate_kinase"/>
</dbReference>
<dbReference type="NCBIfam" id="TIGR00041">
    <property type="entry name" value="DTMP_kinase"/>
    <property type="match status" value="1"/>
</dbReference>
<dbReference type="PANTHER" id="PTHR10344">
    <property type="entry name" value="THYMIDYLATE KINASE"/>
    <property type="match status" value="1"/>
</dbReference>
<dbReference type="PANTHER" id="PTHR10344:SF4">
    <property type="entry name" value="UMP-CMP KINASE 2, MITOCHONDRIAL"/>
    <property type="match status" value="1"/>
</dbReference>
<dbReference type="Pfam" id="PF02223">
    <property type="entry name" value="Thymidylate_kin"/>
    <property type="match status" value="1"/>
</dbReference>
<dbReference type="SUPFAM" id="SSF52540">
    <property type="entry name" value="P-loop containing nucleoside triphosphate hydrolases"/>
    <property type="match status" value="1"/>
</dbReference>
<dbReference type="PROSITE" id="PS01331">
    <property type="entry name" value="THYMIDYLATE_KINASE"/>
    <property type="match status" value="1"/>
</dbReference>
<proteinExistence type="inferred from homology"/>
<comment type="function">
    <text evidence="1">Phosphorylation of dTMP to form dTDP in both de novo and salvage pathways of dTTP synthesis.</text>
</comment>
<comment type="catalytic activity">
    <reaction evidence="1">
        <text>dTMP + ATP = dTDP + ADP</text>
        <dbReference type="Rhea" id="RHEA:13517"/>
        <dbReference type="ChEBI" id="CHEBI:30616"/>
        <dbReference type="ChEBI" id="CHEBI:58369"/>
        <dbReference type="ChEBI" id="CHEBI:63528"/>
        <dbReference type="ChEBI" id="CHEBI:456216"/>
        <dbReference type="EC" id="2.7.4.9"/>
    </reaction>
</comment>
<comment type="similarity">
    <text evidence="1">Belongs to the thymidylate kinase family.</text>
</comment>